<proteinExistence type="inferred from homology"/>
<dbReference type="EMBL" id="CP000825">
    <property type="protein sequence ID" value="ABV50088.1"/>
    <property type="molecule type" value="Genomic_DNA"/>
</dbReference>
<dbReference type="RefSeq" id="WP_012007230.1">
    <property type="nucleotide sequence ID" value="NC_009840.1"/>
</dbReference>
<dbReference type="SMR" id="A8G3A7"/>
<dbReference type="STRING" id="93060.P9215_04721"/>
<dbReference type="KEGG" id="pmh:P9215_04721"/>
<dbReference type="eggNOG" id="COG1799">
    <property type="taxonomic scope" value="Bacteria"/>
</dbReference>
<dbReference type="HOGENOM" id="CLU_078499_1_0_3"/>
<dbReference type="OrthoDB" id="9815206at2"/>
<dbReference type="Proteomes" id="UP000002014">
    <property type="component" value="Chromosome"/>
</dbReference>
<dbReference type="GO" id="GO:0005737">
    <property type="term" value="C:cytoplasm"/>
    <property type="evidence" value="ECO:0007669"/>
    <property type="project" value="UniProtKB-SubCell"/>
</dbReference>
<dbReference type="GO" id="GO:0000917">
    <property type="term" value="P:division septum assembly"/>
    <property type="evidence" value="ECO:0007669"/>
    <property type="project" value="UniProtKB-KW"/>
</dbReference>
<dbReference type="GO" id="GO:0043093">
    <property type="term" value="P:FtsZ-dependent cytokinesis"/>
    <property type="evidence" value="ECO:0007669"/>
    <property type="project" value="UniProtKB-UniRule"/>
</dbReference>
<dbReference type="Gene3D" id="3.30.110.150">
    <property type="entry name" value="SepF-like protein"/>
    <property type="match status" value="1"/>
</dbReference>
<dbReference type="HAMAP" id="MF_01197">
    <property type="entry name" value="SepF"/>
    <property type="match status" value="1"/>
</dbReference>
<dbReference type="InterPro" id="IPR023052">
    <property type="entry name" value="Cell_div_SepF"/>
</dbReference>
<dbReference type="InterPro" id="IPR007561">
    <property type="entry name" value="Cell_div_SepF/SepF-rel"/>
</dbReference>
<dbReference type="InterPro" id="IPR038594">
    <property type="entry name" value="SepF-like_sf"/>
</dbReference>
<dbReference type="PANTHER" id="PTHR35798">
    <property type="entry name" value="CELL DIVISION PROTEIN SEPF"/>
    <property type="match status" value="1"/>
</dbReference>
<dbReference type="PANTHER" id="PTHR35798:SF1">
    <property type="entry name" value="CELL DIVISION PROTEIN SEPF"/>
    <property type="match status" value="1"/>
</dbReference>
<dbReference type="Pfam" id="PF04472">
    <property type="entry name" value="SepF"/>
    <property type="match status" value="1"/>
</dbReference>
<organism>
    <name type="scientific">Prochlorococcus marinus (strain MIT 9215)</name>
    <dbReference type="NCBI Taxonomy" id="93060"/>
    <lineage>
        <taxon>Bacteria</taxon>
        <taxon>Bacillati</taxon>
        <taxon>Cyanobacteriota</taxon>
        <taxon>Cyanophyceae</taxon>
        <taxon>Synechococcales</taxon>
        <taxon>Prochlorococcaceae</taxon>
        <taxon>Prochlorococcus</taxon>
    </lineage>
</organism>
<feature type="chain" id="PRO_0000334058" description="Cell division protein SepF">
    <location>
        <begin position="1"/>
        <end position="191"/>
    </location>
</feature>
<feature type="region of interest" description="Disordered" evidence="2">
    <location>
        <begin position="151"/>
        <end position="191"/>
    </location>
</feature>
<feature type="compositionally biased region" description="Low complexity" evidence="2">
    <location>
        <begin position="151"/>
        <end position="165"/>
    </location>
</feature>
<feature type="compositionally biased region" description="Polar residues" evidence="2">
    <location>
        <begin position="166"/>
        <end position="178"/>
    </location>
</feature>
<sequence length="191" mass="20910">MSLISRLKAVVAGDEYLDDDFDELDYASEDELNDIDNFKNSPRNKNALANANPFDFMNNNRSSKVVGMPGISNSSSEVSLMEPRSFDEMPQAIQALRERKTVILNLTMMDPDQAQRAVDFIAGGTYAIDGHQERVGESIFLFAPSCVNVTSSSPEEASPSSVPTENTPQYSLGKNTTPEPAWGNSKLSAYS</sequence>
<name>SEPF_PROM2</name>
<protein>
    <recommendedName>
        <fullName evidence="1">Cell division protein SepF</fullName>
    </recommendedName>
</protein>
<accession>A8G3A7</accession>
<keyword id="KW-0131">Cell cycle</keyword>
<keyword id="KW-0132">Cell division</keyword>
<keyword id="KW-0963">Cytoplasm</keyword>
<keyword id="KW-0717">Septation</keyword>
<comment type="function">
    <text evidence="1">Cell division protein that is part of the divisome complex and is recruited early to the Z-ring. Probably stimulates Z-ring formation, perhaps through the cross-linking of FtsZ protofilaments. Its function overlaps with FtsA.</text>
</comment>
<comment type="subunit">
    <text evidence="1">Homodimer. Interacts with FtsZ.</text>
</comment>
<comment type="subcellular location">
    <subcellularLocation>
        <location evidence="1">Cytoplasm</location>
    </subcellularLocation>
    <text evidence="1">Localizes to the division site, in a FtsZ-dependent manner.</text>
</comment>
<comment type="similarity">
    <text evidence="1">Belongs to the SepF family.</text>
</comment>
<reference key="1">
    <citation type="journal article" date="2007" name="PLoS Genet.">
        <title>Patterns and implications of gene gain and loss in the evolution of Prochlorococcus.</title>
        <authorList>
            <person name="Kettler G.C."/>
            <person name="Martiny A.C."/>
            <person name="Huang K."/>
            <person name="Zucker J."/>
            <person name="Coleman M.L."/>
            <person name="Rodrigue S."/>
            <person name="Chen F."/>
            <person name="Lapidus A."/>
            <person name="Ferriera S."/>
            <person name="Johnson J."/>
            <person name="Steglich C."/>
            <person name="Church G.M."/>
            <person name="Richardson P."/>
            <person name="Chisholm S.W."/>
        </authorList>
    </citation>
    <scope>NUCLEOTIDE SEQUENCE [LARGE SCALE GENOMIC DNA]</scope>
    <source>
        <strain>MIT 9215</strain>
    </source>
</reference>
<evidence type="ECO:0000255" key="1">
    <source>
        <dbReference type="HAMAP-Rule" id="MF_01197"/>
    </source>
</evidence>
<evidence type="ECO:0000256" key="2">
    <source>
        <dbReference type="SAM" id="MobiDB-lite"/>
    </source>
</evidence>
<gene>
    <name evidence="1" type="primary">sepF</name>
    <name type="ordered locus">P9215_04721</name>
</gene>